<protein>
    <recommendedName>
        <fullName evidence="1">Holo-[acyl-carrier-protein] synthase</fullName>
        <shortName evidence="1">Holo-ACP synthase</shortName>
        <ecNumber evidence="1">2.7.8.7</ecNumber>
    </recommendedName>
    <alternativeName>
        <fullName evidence="1">4'-phosphopantetheinyl transferase AcpS</fullName>
    </alternativeName>
</protein>
<dbReference type="EC" id="2.7.8.7" evidence="1"/>
<dbReference type="EMBL" id="FM178379">
    <property type="protein sequence ID" value="CAQ80205.1"/>
    <property type="molecule type" value="Genomic_DNA"/>
</dbReference>
<dbReference type="RefSeq" id="WP_012550993.1">
    <property type="nucleotide sequence ID" value="NC_011312.1"/>
</dbReference>
<dbReference type="SMR" id="B6EKM5"/>
<dbReference type="KEGG" id="vsa:VSAL_I2521"/>
<dbReference type="eggNOG" id="COG0736">
    <property type="taxonomic scope" value="Bacteria"/>
</dbReference>
<dbReference type="HOGENOM" id="CLU_089696_3_1_6"/>
<dbReference type="Proteomes" id="UP000001730">
    <property type="component" value="Chromosome 1"/>
</dbReference>
<dbReference type="GO" id="GO:0005737">
    <property type="term" value="C:cytoplasm"/>
    <property type="evidence" value="ECO:0007669"/>
    <property type="project" value="UniProtKB-SubCell"/>
</dbReference>
<dbReference type="GO" id="GO:0008897">
    <property type="term" value="F:holo-[acyl-carrier-protein] synthase activity"/>
    <property type="evidence" value="ECO:0007669"/>
    <property type="project" value="UniProtKB-UniRule"/>
</dbReference>
<dbReference type="GO" id="GO:0000287">
    <property type="term" value="F:magnesium ion binding"/>
    <property type="evidence" value="ECO:0007669"/>
    <property type="project" value="UniProtKB-UniRule"/>
</dbReference>
<dbReference type="GO" id="GO:0006633">
    <property type="term" value="P:fatty acid biosynthetic process"/>
    <property type="evidence" value="ECO:0007669"/>
    <property type="project" value="UniProtKB-UniRule"/>
</dbReference>
<dbReference type="FunFam" id="3.90.470.20:FF:000001">
    <property type="entry name" value="Holo-[acyl-carrier-protein] synthase"/>
    <property type="match status" value="1"/>
</dbReference>
<dbReference type="Gene3D" id="3.90.470.20">
    <property type="entry name" value="4'-phosphopantetheinyl transferase domain"/>
    <property type="match status" value="1"/>
</dbReference>
<dbReference type="HAMAP" id="MF_00101">
    <property type="entry name" value="AcpS"/>
    <property type="match status" value="1"/>
</dbReference>
<dbReference type="InterPro" id="IPR008278">
    <property type="entry name" value="4-PPantetheinyl_Trfase_dom"/>
</dbReference>
<dbReference type="InterPro" id="IPR037143">
    <property type="entry name" value="4-PPantetheinyl_Trfase_dom_sf"/>
</dbReference>
<dbReference type="InterPro" id="IPR002582">
    <property type="entry name" value="ACPS"/>
</dbReference>
<dbReference type="InterPro" id="IPR004568">
    <property type="entry name" value="Ppantetheine-prot_Trfase_dom"/>
</dbReference>
<dbReference type="NCBIfam" id="TIGR00516">
    <property type="entry name" value="acpS"/>
    <property type="match status" value="1"/>
</dbReference>
<dbReference type="NCBIfam" id="TIGR00556">
    <property type="entry name" value="pantethn_trn"/>
    <property type="match status" value="1"/>
</dbReference>
<dbReference type="Pfam" id="PF01648">
    <property type="entry name" value="ACPS"/>
    <property type="match status" value="1"/>
</dbReference>
<dbReference type="SUPFAM" id="SSF56214">
    <property type="entry name" value="4'-phosphopantetheinyl transferase"/>
    <property type="match status" value="1"/>
</dbReference>
<comment type="function">
    <text evidence="1">Transfers the 4'-phosphopantetheine moiety from coenzyme A to a Ser of acyl-carrier-protein.</text>
</comment>
<comment type="catalytic activity">
    <reaction evidence="1">
        <text>apo-[ACP] + CoA = holo-[ACP] + adenosine 3',5'-bisphosphate + H(+)</text>
        <dbReference type="Rhea" id="RHEA:12068"/>
        <dbReference type="Rhea" id="RHEA-COMP:9685"/>
        <dbReference type="Rhea" id="RHEA-COMP:9690"/>
        <dbReference type="ChEBI" id="CHEBI:15378"/>
        <dbReference type="ChEBI" id="CHEBI:29999"/>
        <dbReference type="ChEBI" id="CHEBI:57287"/>
        <dbReference type="ChEBI" id="CHEBI:58343"/>
        <dbReference type="ChEBI" id="CHEBI:64479"/>
        <dbReference type="EC" id="2.7.8.7"/>
    </reaction>
</comment>
<comment type="cofactor">
    <cofactor evidence="1">
        <name>Mg(2+)</name>
        <dbReference type="ChEBI" id="CHEBI:18420"/>
    </cofactor>
</comment>
<comment type="subcellular location">
    <subcellularLocation>
        <location evidence="1">Cytoplasm</location>
    </subcellularLocation>
</comment>
<comment type="similarity">
    <text evidence="1">Belongs to the P-Pant transferase superfamily. AcpS family.</text>
</comment>
<proteinExistence type="inferred from homology"/>
<accession>B6EKM5</accession>
<name>ACPS_ALISL</name>
<feature type="chain" id="PRO_1000093851" description="Holo-[acyl-carrier-protein] synthase">
    <location>
        <begin position="1"/>
        <end position="126"/>
    </location>
</feature>
<feature type="binding site" evidence="1">
    <location>
        <position position="9"/>
    </location>
    <ligand>
        <name>Mg(2+)</name>
        <dbReference type="ChEBI" id="CHEBI:18420"/>
    </ligand>
</feature>
<feature type="binding site" evidence="1">
    <location>
        <position position="58"/>
    </location>
    <ligand>
        <name>Mg(2+)</name>
        <dbReference type="ChEBI" id="CHEBI:18420"/>
    </ligand>
</feature>
<organism>
    <name type="scientific">Aliivibrio salmonicida (strain LFI1238)</name>
    <name type="common">Vibrio salmonicida (strain LFI1238)</name>
    <dbReference type="NCBI Taxonomy" id="316275"/>
    <lineage>
        <taxon>Bacteria</taxon>
        <taxon>Pseudomonadati</taxon>
        <taxon>Pseudomonadota</taxon>
        <taxon>Gammaproteobacteria</taxon>
        <taxon>Vibrionales</taxon>
        <taxon>Vibrionaceae</taxon>
        <taxon>Aliivibrio</taxon>
    </lineage>
</organism>
<evidence type="ECO:0000255" key="1">
    <source>
        <dbReference type="HAMAP-Rule" id="MF_00101"/>
    </source>
</evidence>
<gene>
    <name evidence="1" type="primary">acpS</name>
    <name type="ordered locus">VSAL_I2521</name>
</gene>
<sequence>MAIVGLGTDIAEIERVEKALSRSGDAFAERILSQSEFERYQGLKQKGRFLAKRFAAKEAASKALGTGISHGVTFHDFTISNDDNGKPILTLSGKALVLSQQSSVSHIHLTISDERHYAVATVIFES</sequence>
<keyword id="KW-0963">Cytoplasm</keyword>
<keyword id="KW-0275">Fatty acid biosynthesis</keyword>
<keyword id="KW-0276">Fatty acid metabolism</keyword>
<keyword id="KW-0444">Lipid biosynthesis</keyword>
<keyword id="KW-0443">Lipid metabolism</keyword>
<keyword id="KW-0460">Magnesium</keyword>
<keyword id="KW-0479">Metal-binding</keyword>
<keyword id="KW-0808">Transferase</keyword>
<reference key="1">
    <citation type="journal article" date="2008" name="BMC Genomics">
        <title>The genome sequence of the fish pathogen Aliivibrio salmonicida strain LFI1238 shows extensive evidence of gene decay.</title>
        <authorList>
            <person name="Hjerde E."/>
            <person name="Lorentzen M.S."/>
            <person name="Holden M.T."/>
            <person name="Seeger K."/>
            <person name="Paulsen S."/>
            <person name="Bason N."/>
            <person name="Churcher C."/>
            <person name="Harris D."/>
            <person name="Norbertczak H."/>
            <person name="Quail M.A."/>
            <person name="Sanders S."/>
            <person name="Thurston S."/>
            <person name="Parkhill J."/>
            <person name="Willassen N.P."/>
            <person name="Thomson N.R."/>
        </authorList>
    </citation>
    <scope>NUCLEOTIDE SEQUENCE [LARGE SCALE GENOMIC DNA]</scope>
    <source>
        <strain>LFI1238</strain>
    </source>
</reference>